<feature type="transit peptide" description="Mitochondrion" evidence="2">
    <location>
        <begin position="1"/>
        <end position="33"/>
    </location>
</feature>
<feature type="chain" id="PRO_0000421675" description="Glycine-rich RNA-binding protein 4, mitochondrial">
    <location>
        <begin position="34"/>
        <end position="136"/>
    </location>
</feature>
<feature type="domain" description="RRM" evidence="3">
    <location>
        <begin position="35"/>
        <end position="113"/>
    </location>
</feature>
<feature type="region of interest" description="Disordered" evidence="4">
    <location>
        <begin position="113"/>
        <end position="136"/>
    </location>
</feature>
<feature type="region of interest" description="Glycine-rich (GR) required for cell-to-cell movement" evidence="16">
    <location>
        <begin position="123"/>
        <end position="135"/>
    </location>
</feature>
<feature type="compositionally biased region" description="Gly residues" evidence="4">
    <location>
        <begin position="122"/>
        <end position="136"/>
    </location>
</feature>
<feature type="modified residue" description="Phosphoserine" evidence="1">
    <location>
        <position position="43"/>
    </location>
</feature>
<feature type="sequence conflict" description="In Ref. 5; AAM63053." evidence="15" ref="5">
    <original>Q</original>
    <variation>H</variation>
    <location>
        <position position="17"/>
    </location>
</feature>
<name>RBG4_ARATH</name>
<dbReference type="EMBL" id="MN064666">
    <property type="protein sequence ID" value="QGZ19401.1"/>
    <property type="molecule type" value="mRNA"/>
</dbReference>
<dbReference type="EMBL" id="AP001297">
    <property type="protein sequence ID" value="BAB03001.1"/>
    <property type="molecule type" value="Genomic_DNA"/>
</dbReference>
<dbReference type="EMBL" id="CP002686">
    <property type="protein sequence ID" value="AEE76819.1"/>
    <property type="molecule type" value="Genomic_DNA"/>
</dbReference>
<dbReference type="EMBL" id="CP002686">
    <property type="protein sequence ID" value="AEE76820.1"/>
    <property type="molecule type" value="Genomic_DNA"/>
</dbReference>
<dbReference type="EMBL" id="AY070755">
    <property type="protein sequence ID" value="AAL50093.1"/>
    <property type="molecule type" value="mRNA"/>
</dbReference>
<dbReference type="EMBL" id="AY097374">
    <property type="protein sequence ID" value="AAM19890.1"/>
    <property type="molecule type" value="mRNA"/>
</dbReference>
<dbReference type="EMBL" id="AY085838">
    <property type="protein sequence ID" value="AAM63053.1"/>
    <property type="molecule type" value="mRNA"/>
</dbReference>
<dbReference type="RefSeq" id="NP_189025.1">
    <property type="nucleotide sequence ID" value="NM_113288.3"/>
</dbReference>
<dbReference type="RefSeq" id="NP_850629.1">
    <property type="nucleotide sequence ID" value="NM_180298.4"/>
</dbReference>
<dbReference type="SMR" id="Q9LIS2"/>
<dbReference type="FunCoup" id="Q9LIS2">
    <property type="interactions" value="1750"/>
</dbReference>
<dbReference type="STRING" id="3702.Q9LIS2"/>
<dbReference type="SwissPalm" id="Q9LIS2"/>
<dbReference type="PaxDb" id="3702-AT3G23830.2"/>
<dbReference type="ProteomicsDB" id="236520"/>
<dbReference type="EnsemblPlants" id="AT3G23830.1">
    <property type="protein sequence ID" value="AT3G23830.1"/>
    <property type="gene ID" value="AT3G23830"/>
</dbReference>
<dbReference type="EnsemblPlants" id="AT3G23830.2">
    <property type="protein sequence ID" value="AT3G23830.2"/>
    <property type="gene ID" value="AT3G23830"/>
</dbReference>
<dbReference type="GeneID" id="821966"/>
<dbReference type="Gramene" id="AT3G23830.1">
    <property type="protein sequence ID" value="AT3G23830.1"/>
    <property type="gene ID" value="AT3G23830"/>
</dbReference>
<dbReference type="Gramene" id="AT3G23830.2">
    <property type="protein sequence ID" value="AT3G23830.2"/>
    <property type="gene ID" value="AT3G23830"/>
</dbReference>
<dbReference type="KEGG" id="ath:AT3G23830"/>
<dbReference type="Araport" id="AT3G23830"/>
<dbReference type="TAIR" id="AT3G23830">
    <property type="gene designation" value="RBGA4"/>
</dbReference>
<dbReference type="eggNOG" id="KOG0118">
    <property type="taxonomic scope" value="Eukaryota"/>
</dbReference>
<dbReference type="HOGENOM" id="CLU_012062_28_4_1"/>
<dbReference type="InParanoid" id="Q9LIS2"/>
<dbReference type="OMA" id="NLANDRP"/>
<dbReference type="PhylomeDB" id="Q9LIS2"/>
<dbReference type="CD-CODE" id="4299E36E">
    <property type="entry name" value="Nucleolus"/>
</dbReference>
<dbReference type="PRO" id="PR:Q9LIS2"/>
<dbReference type="Proteomes" id="UP000006548">
    <property type="component" value="Chromosome 3"/>
</dbReference>
<dbReference type="ExpressionAtlas" id="Q9LIS2">
    <property type="expression patterns" value="baseline and differential"/>
</dbReference>
<dbReference type="GO" id="GO:0005829">
    <property type="term" value="C:cytosol"/>
    <property type="evidence" value="ECO:0007005"/>
    <property type="project" value="TAIR"/>
</dbReference>
<dbReference type="GO" id="GO:0005615">
    <property type="term" value="C:extracellular space"/>
    <property type="evidence" value="ECO:0000314"/>
    <property type="project" value="UniProtKB"/>
</dbReference>
<dbReference type="GO" id="GO:0005739">
    <property type="term" value="C:mitochondrion"/>
    <property type="evidence" value="ECO:0000314"/>
    <property type="project" value="UniProtKB"/>
</dbReference>
<dbReference type="GO" id="GO:0003690">
    <property type="term" value="F:double-stranded DNA binding"/>
    <property type="evidence" value="ECO:0000314"/>
    <property type="project" value="TAIR"/>
</dbReference>
<dbReference type="GO" id="GO:0035198">
    <property type="term" value="F:miRNA binding"/>
    <property type="evidence" value="ECO:0000314"/>
    <property type="project" value="UniProtKB"/>
</dbReference>
<dbReference type="GO" id="GO:0003723">
    <property type="term" value="F:RNA binding"/>
    <property type="evidence" value="ECO:0000314"/>
    <property type="project" value="TAIR"/>
</dbReference>
<dbReference type="GO" id="GO:0003697">
    <property type="term" value="F:single-stranded DNA binding"/>
    <property type="evidence" value="ECO:0000314"/>
    <property type="project" value="TAIR"/>
</dbReference>
<dbReference type="GO" id="GO:0003727">
    <property type="term" value="F:single-stranded RNA binding"/>
    <property type="evidence" value="ECO:0000314"/>
    <property type="project" value="UniProtKB"/>
</dbReference>
<dbReference type="GO" id="GO:0035197">
    <property type="term" value="F:siRNA binding"/>
    <property type="evidence" value="ECO:0000314"/>
    <property type="project" value="UniProtKB"/>
</dbReference>
<dbReference type="GO" id="GO:0006858">
    <property type="term" value="P:extracellular transport"/>
    <property type="evidence" value="ECO:0000314"/>
    <property type="project" value="UniProtKB"/>
</dbReference>
<dbReference type="GO" id="GO:1990428">
    <property type="term" value="P:miRNA transport"/>
    <property type="evidence" value="ECO:0000314"/>
    <property type="project" value="UniProtKB"/>
</dbReference>
<dbReference type="GO" id="GO:1900864">
    <property type="term" value="P:mitochondrial RNA modification"/>
    <property type="evidence" value="ECO:0000316"/>
    <property type="project" value="TAIR"/>
</dbReference>
<dbReference type="GO" id="GO:0050688">
    <property type="term" value="P:regulation of defense response to virus"/>
    <property type="evidence" value="ECO:0000314"/>
    <property type="project" value="UniProtKB"/>
</dbReference>
<dbReference type="GO" id="GO:0009409">
    <property type="term" value="P:response to cold"/>
    <property type="evidence" value="ECO:0000270"/>
    <property type="project" value="UniProtKB"/>
</dbReference>
<dbReference type="GO" id="GO:0006970">
    <property type="term" value="P:response to osmotic stress"/>
    <property type="evidence" value="ECO:0000315"/>
    <property type="project" value="TAIR"/>
</dbReference>
<dbReference type="GO" id="GO:0009651">
    <property type="term" value="P:response to salt stress"/>
    <property type="evidence" value="ECO:0000315"/>
    <property type="project" value="TAIR"/>
</dbReference>
<dbReference type="GO" id="GO:0009414">
    <property type="term" value="P:response to water deprivation"/>
    <property type="evidence" value="ECO:0000270"/>
    <property type="project" value="UniProtKB"/>
</dbReference>
<dbReference type="GO" id="GO:0050658">
    <property type="term" value="P:RNA transport"/>
    <property type="evidence" value="ECO:0000314"/>
    <property type="project" value="UniProtKB"/>
</dbReference>
<dbReference type="CDD" id="cd21608">
    <property type="entry name" value="RRM2_NsCP33_like"/>
    <property type="match status" value="1"/>
</dbReference>
<dbReference type="FunFam" id="3.30.70.330:FF:000612">
    <property type="entry name" value="Glycine-rich RNA-binding protein 2"/>
    <property type="match status" value="1"/>
</dbReference>
<dbReference type="Gene3D" id="3.30.70.330">
    <property type="match status" value="1"/>
</dbReference>
<dbReference type="InterPro" id="IPR012677">
    <property type="entry name" value="Nucleotide-bd_a/b_plait_sf"/>
</dbReference>
<dbReference type="InterPro" id="IPR035979">
    <property type="entry name" value="RBD_domain_sf"/>
</dbReference>
<dbReference type="InterPro" id="IPR048289">
    <property type="entry name" value="RRM2_NsCP33-like"/>
</dbReference>
<dbReference type="InterPro" id="IPR000504">
    <property type="entry name" value="RRM_dom"/>
</dbReference>
<dbReference type="InterPro" id="IPR052462">
    <property type="entry name" value="SLIRP/GR-RBP-like"/>
</dbReference>
<dbReference type="PANTHER" id="PTHR48027">
    <property type="entry name" value="HETEROGENEOUS NUCLEAR RIBONUCLEOPROTEIN 87F-RELATED"/>
    <property type="match status" value="1"/>
</dbReference>
<dbReference type="Pfam" id="PF00076">
    <property type="entry name" value="RRM_1"/>
    <property type="match status" value="1"/>
</dbReference>
<dbReference type="SMART" id="SM00360">
    <property type="entry name" value="RRM"/>
    <property type="match status" value="1"/>
</dbReference>
<dbReference type="SUPFAM" id="SSF54928">
    <property type="entry name" value="RNA-binding domain, RBD"/>
    <property type="match status" value="1"/>
</dbReference>
<dbReference type="PROSITE" id="PS50102">
    <property type="entry name" value="RRM"/>
    <property type="match status" value="1"/>
</dbReference>
<accession>Q9LIS2</accession>
<accession>A0A6B9JFL3</accession>
<accession>Q8LDS0</accession>
<reference key="1">
    <citation type="journal article" date="2020" name="Mol. Plant">
        <title>A plant SMALL RNA-BINDING PROTEIN 1 family mediates cell-to-cell trafficking of RNAi signals.</title>
        <authorList>
            <person name="Yan Y."/>
            <person name="Ham B.-K."/>
            <person name="Chong Y.H."/>
            <person name="Yeh S.-D."/>
            <person name="Lucas W.J."/>
        </authorList>
    </citation>
    <scope>NUCLEOTIDE SEQUENCE [MRNA]</scope>
    <scope>FUNCTION</scope>
    <scope>DOMAIN</scope>
    <scope>SUBUNIT</scope>
    <scope>GENE FAMILY</scope>
    <source>
        <strain>cv. Columbia</strain>
    </source>
</reference>
<reference key="2">
    <citation type="journal article" date="2000" name="DNA Res.">
        <title>Structural analysis of Arabidopsis thaliana chromosome 3. II. Sequence features of the 4,251,695 bp regions covered by 90 P1, TAC and BAC clones.</title>
        <authorList>
            <person name="Kaneko T."/>
            <person name="Katoh T."/>
            <person name="Sato S."/>
            <person name="Nakamura Y."/>
            <person name="Asamizu E."/>
            <person name="Tabata S."/>
        </authorList>
    </citation>
    <scope>NUCLEOTIDE SEQUENCE [LARGE SCALE GENOMIC DNA]</scope>
    <source>
        <strain>cv. Columbia</strain>
    </source>
</reference>
<reference key="3">
    <citation type="journal article" date="2017" name="Plant J.">
        <title>Araport11: a complete reannotation of the Arabidopsis thaliana reference genome.</title>
        <authorList>
            <person name="Cheng C.Y."/>
            <person name="Krishnakumar V."/>
            <person name="Chan A.P."/>
            <person name="Thibaud-Nissen F."/>
            <person name="Schobel S."/>
            <person name="Town C.D."/>
        </authorList>
    </citation>
    <scope>GENOME REANNOTATION</scope>
    <source>
        <strain>cv. Columbia</strain>
    </source>
</reference>
<reference key="4">
    <citation type="journal article" date="2003" name="Science">
        <title>Empirical analysis of transcriptional activity in the Arabidopsis genome.</title>
        <authorList>
            <person name="Yamada K."/>
            <person name="Lim J."/>
            <person name="Dale J.M."/>
            <person name="Chen H."/>
            <person name="Shinn P."/>
            <person name="Palm C.J."/>
            <person name="Southwick A.M."/>
            <person name="Wu H.C."/>
            <person name="Kim C.J."/>
            <person name="Nguyen M."/>
            <person name="Pham P.K."/>
            <person name="Cheuk R.F."/>
            <person name="Karlin-Newmann G."/>
            <person name="Liu S.X."/>
            <person name="Lam B."/>
            <person name="Sakano H."/>
            <person name="Wu T."/>
            <person name="Yu G."/>
            <person name="Miranda M."/>
            <person name="Quach H.L."/>
            <person name="Tripp M."/>
            <person name="Chang C.H."/>
            <person name="Lee J.M."/>
            <person name="Toriumi M.J."/>
            <person name="Chan M.M."/>
            <person name="Tang C.C."/>
            <person name="Onodera C.S."/>
            <person name="Deng J.M."/>
            <person name="Akiyama K."/>
            <person name="Ansari Y."/>
            <person name="Arakawa T."/>
            <person name="Banh J."/>
            <person name="Banno F."/>
            <person name="Bowser L."/>
            <person name="Brooks S.Y."/>
            <person name="Carninci P."/>
            <person name="Chao Q."/>
            <person name="Choy N."/>
            <person name="Enju A."/>
            <person name="Goldsmith A.D."/>
            <person name="Gurjal M."/>
            <person name="Hansen N.F."/>
            <person name="Hayashizaki Y."/>
            <person name="Johnson-Hopson C."/>
            <person name="Hsuan V.W."/>
            <person name="Iida K."/>
            <person name="Karnes M."/>
            <person name="Khan S."/>
            <person name="Koesema E."/>
            <person name="Ishida J."/>
            <person name="Jiang P.X."/>
            <person name="Jones T."/>
            <person name="Kawai J."/>
            <person name="Kamiya A."/>
            <person name="Meyers C."/>
            <person name="Nakajima M."/>
            <person name="Narusaka M."/>
            <person name="Seki M."/>
            <person name="Sakurai T."/>
            <person name="Satou M."/>
            <person name="Tamse R."/>
            <person name="Vaysberg M."/>
            <person name="Wallender E.K."/>
            <person name="Wong C."/>
            <person name="Yamamura Y."/>
            <person name="Yuan S."/>
            <person name="Shinozaki K."/>
            <person name="Davis R.W."/>
            <person name="Theologis A."/>
            <person name="Ecker J.R."/>
        </authorList>
    </citation>
    <scope>NUCLEOTIDE SEQUENCE [LARGE SCALE MRNA]</scope>
    <source>
        <strain>cv. Columbia</strain>
    </source>
</reference>
<reference key="5">
    <citation type="submission" date="2002-03" db="EMBL/GenBank/DDBJ databases">
        <title>Full-length cDNA from Arabidopsis thaliana.</title>
        <authorList>
            <person name="Brover V.V."/>
            <person name="Troukhan M.E."/>
            <person name="Alexandrov N.A."/>
            <person name="Lu Y.-P."/>
            <person name="Flavell R.B."/>
            <person name="Feldmann K.A."/>
        </authorList>
    </citation>
    <scope>NUCLEOTIDE SEQUENCE [LARGE SCALE MRNA]</scope>
</reference>
<reference key="6">
    <citation type="journal article" date="2002" name="Nucleic Acids Res.">
        <title>Genome analysis: RNA recognition motif (RRM) and K homology (KH) domain RNA-binding proteins from the flowering plant Arabidopsis thaliana.</title>
        <authorList>
            <person name="Lorkovic Z.J."/>
            <person name="Barta A."/>
        </authorList>
    </citation>
    <scope>GENE FAMILY</scope>
</reference>
<reference key="7">
    <citation type="journal article" date="2002" name="Proc. Natl. Acad. Sci. U.S.A.">
        <title>A family of RRM-type RNA-binding proteins specific to plant mitochondria.</title>
        <authorList>
            <person name="Vermel M."/>
            <person name="Guermann B."/>
            <person name="Delage L."/>
            <person name="Grienenberger J.M."/>
            <person name="Marechal-Drouard L."/>
            <person name="Gualberto J.M."/>
        </authorList>
    </citation>
    <scope>SUBCELLULAR LOCATION</scope>
</reference>
<reference key="8">
    <citation type="journal article" date="2005" name="J. Exp. Bot.">
        <title>Characterization of transgenic Arabidopsis plants overexpressing GR-RBP4 under high salinity, dehydration, or cold stress.</title>
        <authorList>
            <person name="Kwak K.J."/>
            <person name="Kim Y.O."/>
            <person name="Kang H."/>
        </authorList>
    </citation>
    <scope>TISSUE SPECIFICITY</scope>
    <scope>INDUCTION BY COLD; DEHYDRATION AND SALT</scope>
    <scope>FUNCTION</scope>
</reference>
<reference key="9">
    <citation type="journal article" date="2007" name="Nucleic Acids Res.">
        <title>Cold shock domain proteins and glycine-rich RNA-binding proteins from Arabidopsis thaliana can promote the cold adaptation process in Escherichia coli.</title>
        <authorList>
            <person name="Kim J.S."/>
            <person name="Park S.J."/>
            <person name="Kwak K.J."/>
            <person name="Kim Y.O."/>
            <person name="Kim J.Y."/>
            <person name="Song J."/>
            <person name="Jang B."/>
            <person name="Jung C.-H."/>
            <person name="Kang H."/>
        </authorList>
    </citation>
    <scope>INDUCTION BY COLD</scope>
</reference>
<reference key="10">
    <citation type="journal article" date="2010" name="Plant Signal. Behav.">
        <title>Functional diversity of the plant glycine-rich proteins superfamily.</title>
        <authorList>
            <person name="Mangeon A."/>
            <person name="Junqueira R.M."/>
            <person name="Sachetto-Martins G."/>
        </authorList>
    </citation>
    <scope>NOMENCLATURE</scope>
</reference>
<keyword id="KW-0496">Mitochondrion</keyword>
<keyword id="KW-0597">Phosphoprotein</keyword>
<keyword id="KW-1185">Reference proteome</keyword>
<keyword id="KW-0694">RNA-binding</keyword>
<keyword id="KW-0964">Secreted</keyword>
<keyword id="KW-0809">Transit peptide</keyword>
<gene>
    <name evidence="13" type="primary">RBG4</name>
    <name evidence="9 11 13" type="synonym">GR-RBP4</name>
    <name evidence="12 13" type="synonym">GRP4</name>
    <name evidence="10" type="synonym">MRBP1B</name>
    <name evidence="14" type="synonym">SRBP4</name>
    <name evidence="17" type="ordered locus">At3g23830</name>
    <name evidence="18" type="ORF">F14O13.2</name>
</gene>
<organism>
    <name type="scientific">Arabidopsis thaliana</name>
    <name type="common">Mouse-ear cress</name>
    <dbReference type="NCBI Taxonomy" id="3702"/>
    <lineage>
        <taxon>Eukaryota</taxon>
        <taxon>Viridiplantae</taxon>
        <taxon>Streptophyta</taxon>
        <taxon>Embryophyta</taxon>
        <taxon>Tracheophyta</taxon>
        <taxon>Spermatophyta</taxon>
        <taxon>Magnoliopsida</taxon>
        <taxon>eudicotyledons</taxon>
        <taxon>Gunneridae</taxon>
        <taxon>Pentapetalae</taxon>
        <taxon>rosids</taxon>
        <taxon>malvids</taxon>
        <taxon>Brassicales</taxon>
        <taxon>Brassicaceae</taxon>
        <taxon>Camelineae</taxon>
        <taxon>Arabidopsis</taxon>
    </lineage>
</organism>
<sequence>MAFCNKLSGILRQGVSQSSNGPVTSMLGSLRYMSSKLFVGGLSWGTDDSSLKQAFTSFGEVTEATVIADRETGRSRGFGFVSFSCEDSANNAIKEMDGKELNGRQIRVNLATERSSAPRSSFGGGGGYGGGGGGGY</sequence>
<protein>
    <recommendedName>
        <fullName evidence="9 11">Glycine-rich RNA-binding protein 4, mitochondrial</fullName>
        <shortName evidence="9 11">AtGR-RBP4</shortName>
    </recommendedName>
    <alternativeName>
        <fullName evidence="13">AtRBG4</fullName>
    </alternativeName>
    <alternativeName>
        <fullName evidence="12">Glycine-rich protein 4</fullName>
        <shortName evidence="12">AtGRP4</shortName>
    </alternativeName>
    <alternativeName>
        <fullName evidence="10">Mitochondrial RNA-binding protein 1b</fullName>
        <shortName evidence="10">At-mRBP1b</shortName>
    </alternativeName>
    <alternativeName>
        <fullName evidence="14">Small RNA binding protein 4</fullName>
        <shortName evidence="14">AtSRBP4</shortName>
    </alternativeName>
</protein>
<proteinExistence type="evidence at protein level"/>
<comment type="function">
    <text evidence="6 8">Possibly has a role in RNA transcription or processing during stress (PubMed:16207746). Binds sequence non-specifically to RNAs and DNAs (PubMed:16207746). Mediates cell-to-cell trafficking of RNA interference (RNAi) signals (small RNAs (sRNA), e.g. small interfering RNA (siRNA) and microRNA (miRNA)) which regulate growth and development, as well as responses to environmental inputs, including pathogen attack; can compromise zucchini yellow mosaic virus (ZYMV) and tobacco rattle virus (TRV) infections at the early stage (PubMed:31812689).</text>
</comment>
<comment type="subunit">
    <text evidence="8">Binds to small phloem-mobile single-stranded RNAs (ss-sRNA, e.g. small interfering RNA (siRNA) and microRNA (miRNA)) in the phloeme exudate, including viral-derived sRNA (vsiRNA).</text>
</comment>
<comment type="subcellular location">
    <subcellularLocation>
        <location evidence="5">Mitochondrion</location>
    </subcellularLocation>
    <subcellularLocation>
        <location evidence="8">Secreted</location>
    </subcellularLocation>
    <text evidence="8">Observed in the phloem translocation stream.</text>
</comment>
<comment type="tissue specificity">
    <text evidence="6">Abundantly expressed in young plants, root tips, and flowers, but weakly in mature leaves and stems, implying highly expression in actively proliferating organs.</text>
</comment>
<comment type="induction">
    <text evidence="6 7">Up-regulated by cold stress and down-regulated by salt stress and dehydration stress.</text>
</comment>
<comment type="domain">
    <text evidence="8">The glycine-rich (GR) domain is necessary and sufficient for cell-to-cell movement and to interefere with zucchini yellow mosaic virus (ZYMV) infection.</text>
</comment>
<comment type="miscellaneous">
    <text>Plants overexpressing RBG4 display retarded germination under salt and dehydration stress.</text>
</comment>
<comment type="similarity">
    <text evidence="15">Belongs to the GR-RBP family.</text>
</comment>
<evidence type="ECO:0000250" key="1">
    <source>
        <dbReference type="UniProtKB" id="Q8RWN5"/>
    </source>
</evidence>
<evidence type="ECO:0000255" key="2"/>
<evidence type="ECO:0000255" key="3">
    <source>
        <dbReference type="PROSITE-ProRule" id="PRU00176"/>
    </source>
</evidence>
<evidence type="ECO:0000256" key="4">
    <source>
        <dbReference type="SAM" id="MobiDB-lite"/>
    </source>
</evidence>
<evidence type="ECO:0000269" key="5">
    <source>
    </source>
</evidence>
<evidence type="ECO:0000269" key="6">
    <source>
    </source>
</evidence>
<evidence type="ECO:0000269" key="7">
    <source>
    </source>
</evidence>
<evidence type="ECO:0000269" key="8">
    <source>
    </source>
</evidence>
<evidence type="ECO:0000303" key="9">
    <source>
    </source>
</evidence>
<evidence type="ECO:0000303" key="10">
    <source>
    </source>
</evidence>
<evidence type="ECO:0000303" key="11">
    <source>
    </source>
</evidence>
<evidence type="ECO:0000303" key="12">
    <source>
    </source>
</evidence>
<evidence type="ECO:0000303" key="13">
    <source>
    </source>
</evidence>
<evidence type="ECO:0000303" key="14">
    <source>
    </source>
</evidence>
<evidence type="ECO:0000305" key="15"/>
<evidence type="ECO:0000305" key="16">
    <source>
    </source>
</evidence>
<evidence type="ECO:0000312" key="17">
    <source>
        <dbReference type="Araport" id="AT3G23830"/>
    </source>
</evidence>
<evidence type="ECO:0000312" key="18">
    <source>
        <dbReference type="EMBL" id="BAB03001.1"/>
    </source>
</evidence>